<proteinExistence type="inferred from homology"/>
<evidence type="ECO:0000250" key="1"/>
<evidence type="ECO:0000305" key="2"/>
<feature type="chain" id="PRO_0000413893" description="Alpha-1,4-glucan:maltose-1-phosphate maltosyltransferase">
    <location>
        <begin position="1"/>
        <end position="1136"/>
    </location>
</feature>
<feature type="region of interest" description="Unknown">
    <location>
        <begin position="1"/>
        <end position="439"/>
    </location>
</feature>
<feature type="region of interest" description="Maltosyltransferase">
    <location>
        <begin position="440"/>
        <end position="1136"/>
    </location>
</feature>
<feature type="active site" description="Nucleophile" evidence="1">
    <location>
        <position position="842"/>
    </location>
</feature>
<feature type="active site" description="Proton donor" evidence="1">
    <location>
        <position position="871"/>
    </location>
</feature>
<feature type="binding site" evidence="1">
    <location>
        <position position="710"/>
    </location>
    <ligand>
        <name>alpha-maltose 1-phosphate</name>
        <dbReference type="ChEBI" id="CHEBI:63576"/>
    </ligand>
</feature>
<feature type="binding site" evidence="1">
    <location>
        <position position="770"/>
    </location>
    <ligand>
        <name>alpha-maltose 1-phosphate</name>
        <dbReference type="ChEBI" id="CHEBI:63576"/>
    </ligand>
</feature>
<feature type="binding site" evidence="1">
    <location>
        <position position="805"/>
    </location>
    <ligand>
        <name>alpha-maltose 1-phosphate</name>
        <dbReference type="ChEBI" id="CHEBI:63576"/>
    </ligand>
</feature>
<feature type="binding site" evidence="1">
    <location>
        <position position="843"/>
    </location>
    <ligand>
        <name>alpha-maltose 1-phosphate</name>
        <dbReference type="ChEBI" id="CHEBI:63576"/>
    </ligand>
</feature>
<feature type="binding site" evidence="1">
    <location>
        <begin position="982"/>
        <end position="983"/>
    </location>
    <ligand>
        <name>alpha-maltose 1-phosphate</name>
        <dbReference type="ChEBI" id="CHEBI:63576"/>
    </ligand>
</feature>
<feature type="site" description="Transition state stabilizer" evidence="1">
    <location>
        <position position="929"/>
    </location>
</feature>
<organism>
    <name type="scientific">Burkholderia pseudomallei (strain K96243)</name>
    <dbReference type="NCBI Taxonomy" id="272560"/>
    <lineage>
        <taxon>Bacteria</taxon>
        <taxon>Pseudomonadati</taxon>
        <taxon>Pseudomonadota</taxon>
        <taxon>Betaproteobacteria</taxon>
        <taxon>Burkholderiales</taxon>
        <taxon>Burkholderiaceae</taxon>
        <taxon>Burkholderia</taxon>
        <taxon>pseudomallei group</taxon>
    </lineage>
</organism>
<dbReference type="EC" id="2.4.99.16"/>
<dbReference type="EMBL" id="BX571965">
    <property type="protein sequence ID" value="CAH36075.1"/>
    <property type="status" value="ALT_INIT"/>
    <property type="molecule type" value="Genomic_DNA"/>
</dbReference>
<dbReference type="RefSeq" id="WP_231857455.1">
    <property type="nucleotide sequence ID" value="NC_006350.1"/>
</dbReference>
<dbReference type="RefSeq" id="YP_108673.1">
    <property type="nucleotide sequence ID" value="NC_006350.1"/>
</dbReference>
<dbReference type="SMR" id="Q63T93"/>
<dbReference type="STRING" id="272560.BPSL2074"/>
<dbReference type="KEGG" id="bps:BPSL2074"/>
<dbReference type="PATRIC" id="fig|272560.6.peg.2349"/>
<dbReference type="eggNOG" id="COG0366">
    <property type="taxonomic scope" value="Bacteria"/>
</dbReference>
<dbReference type="Proteomes" id="UP000000605">
    <property type="component" value="Chromosome 1"/>
</dbReference>
<dbReference type="GO" id="GO:0016758">
    <property type="term" value="F:hexosyltransferase activity"/>
    <property type="evidence" value="ECO:0007669"/>
    <property type="project" value="UniProtKB-UniRule"/>
</dbReference>
<dbReference type="GO" id="GO:0004553">
    <property type="term" value="F:hydrolase activity, hydrolyzing O-glycosyl compounds"/>
    <property type="evidence" value="ECO:0007669"/>
    <property type="project" value="InterPro"/>
</dbReference>
<dbReference type="GO" id="GO:0030979">
    <property type="term" value="P:alpha-glucan biosynthetic process"/>
    <property type="evidence" value="ECO:0007669"/>
    <property type="project" value="UniProtKB-UniRule"/>
</dbReference>
<dbReference type="CDD" id="cd11344">
    <property type="entry name" value="AmyAc_GlgE_like"/>
    <property type="match status" value="1"/>
</dbReference>
<dbReference type="Gene3D" id="3.20.20.80">
    <property type="entry name" value="Glycosidases"/>
    <property type="match status" value="2"/>
</dbReference>
<dbReference type="Gene3D" id="2.60.40.1180">
    <property type="entry name" value="Golgi alpha-mannosidase II"/>
    <property type="match status" value="1"/>
</dbReference>
<dbReference type="Gene3D" id="2.60.40.10">
    <property type="entry name" value="Immunoglobulins"/>
    <property type="match status" value="1"/>
</dbReference>
<dbReference type="Gene3D" id="1.20.58.80">
    <property type="entry name" value="Phosphotransferase system, lactose/cellobiose-type IIA subunit"/>
    <property type="match status" value="1"/>
</dbReference>
<dbReference type="HAMAP" id="MF_02124">
    <property type="entry name" value="GlgE"/>
    <property type="match status" value="1"/>
</dbReference>
<dbReference type="InterPro" id="IPR026585">
    <property type="entry name" value="GlgE"/>
</dbReference>
<dbReference type="InterPro" id="IPR049171">
    <property type="entry name" value="GLGE_C"/>
</dbReference>
<dbReference type="InterPro" id="IPR021828">
    <property type="entry name" value="GlgE_dom_N/S"/>
</dbReference>
<dbReference type="InterPro" id="IPR006047">
    <property type="entry name" value="Glyco_hydro_13_cat_dom"/>
</dbReference>
<dbReference type="InterPro" id="IPR013780">
    <property type="entry name" value="Glyco_hydro_b"/>
</dbReference>
<dbReference type="InterPro" id="IPR017853">
    <property type="entry name" value="Glycoside_hydrolase_SF"/>
</dbReference>
<dbReference type="InterPro" id="IPR013783">
    <property type="entry name" value="Ig-like_fold"/>
</dbReference>
<dbReference type="PANTHER" id="PTHR47786">
    <property type="entry name" value="ALPHA-1,4-GLUCAN:MALTOSE-1-PHOSPHATE MALTOSYLTRANSFERASE"/>
    <property type="match status" value="1"/>
</dbReference>
<dbReference type="PANTHER" id="PTHR47786:SF2">
    <property type="entry name" value="GLYCOSYL HYDROLASE FAMILY 13 CATALYTIC DOMAIN-CONTAINING PROTEIN"/>
    <property type="match status" value="1"/>
</dbReference>
<dbReference type="Pfam" id="PF21702">
    <property type="entry name" value="GLGE_C"/>
    <property type="match status" value="1"/>
</dbReference>
<dbReference type="Pfam" id="PF11896">
    <property type="entry name" value="GlgE_dom_N_S"/>
    <property type="match status" value="1"/>
</dbReference>
<dbReference type="SMART" id="SM00642">
    <property type="entry name" value="Aamy"/>
    <property type="match status" value="1"/>
</dbReference>
<dbReference type="SUPFAM" id="SSF51445">
    <property type="entry name" value="(Trans)glycosidases"/>
    <property type="match status" value="2"/>
</dbReference>
<reference key="1">
    <citation type="journal article" date="2004" name="Proc. Natl. Acad. Sci. U.S.A.">
        <title>Genomic plasticity of the causative agent of melioidosis, Burkholderia pseudomallei.</title>
        <authorList>
            <person name="Holden M.T.G."/>
            <person name="Titball R.W."/>
            <person name="Peacock S.J."/>
            <person name="Cerdeno-Tarraga A.-M."/>
            <person name="Atkins T."/>
            <person name="Crossman L.C."/>
            <person name="Pitt T."/>
            <person name="Churcher C."/>
            <person name="Mungall K.L."/>
            <person name="Bentley S.D."/>
            <person name="Sebaihia M."/>
            <person name="Thomson N.R."/>
            <person name="Bason N."/>
            <person name="Beacham I.R."/>
            <person name="Brooks K."/>
            <person name="Brown K.A."/>
            <person name="Brown N.F."/>
            <person name="Challis G.L."/>
            <person name="Cherevach I."/>
            <person name="Chillingworth T."/>
            <person name="Cronin A."/>
            <person name="Crossett B."/>
            <person name="Davis P."/>
            <person name="DeShazer D."/>
            <person name="Feltwell T."/>
            <person name="Fraser A."/>
            <person name="Hance Z."/>
            <person name="Hauser H."/>
            <person name="Holroyd S."/>
            <person name="Jagels K."/>
            <person name="Keith K.E."/>
            <person name="Maddison M."/>
            <person name="Moule S."/>
            <person name="Price C."/>
            <person name="Quail M.A."/>
            <person name="Rabbinowitsch E."/>
            <person name="Rutherford K."/>
            <person name="Sanders M."/>
            <person name="Simmonds M."/>
            <person name="Songsivilai S."/>
            <person name="Stevens K."/>
            <person name="Tumapa S."/>
            <person name="Vesaratchavest M."/>
            <person name="Whitehead S."/>
            <person name="Yeats C."/>
            <person name="Barrell B.G."/>
            <person name="Oyston P.C.F."/>
            <person name="Parkhill J."/>
        </authorList>
    </citation>
    <scope>NUCLEOTIDE SEQUENCE [LARGE SCALE GENOMIC DNA]</scope>
    <source>
        <strain>K96243</strain>
    </source>
</reference>
<sequence length="1136" mass="125438">METRPSFAPNLYFCDARLVGPLHAWPPLFERVAAWGFDHVLIGGLWAASRRGYPRHVADPDRPAESFATSLDATSALARLSDSAREHGLRIAVEVVVDRVAREHPLHDAHRAWYVVDERDDALIDPRTAALAHDVAHANVGSAAALDALADWWRARLGALADAGAAAFLVDAPQRMPAHWWAALLRALRQARADLPVIAGVPGREREALAQLACAGFDAAFSSLRWWDLRAPWFVEEHRLLRRVGAPIAFPDAFDGPRLAHDWRQAAPETIERAHRRALWTAAALGTGWLVPMGFERGVAVELMAREPRADAYRAALDSAPFDLSGAIAEANALRRATPALRGNGEIAQLTGADAPATVLLRGARTALEYDDEAALIAVNPDLAHPAAIAPCAALAGVPGGFTRFAPFADGRRPRMGALEPFALAAGACTLLRAQRARPVTTAPAEDRRGNRPGTRASVTAALAGERIAIERIEPVVDDGRFAVKRVIGERLAVRAAIFADGHARLAAAVQWRAADENGWHEARCAAEGNDAWRADIPLERLGRHLFRVIAWRDDWATLVDEIGKKHAAGQAVALELEEARRLAADVLTRAPEANPAALAVLREFAAALDAAPPDQRLALIGAPHVADAFAALRERAFATRDAPVFPVDVERRAARFASWYEMFPRSASDDVRRHGTFDDVVAHLPRIRDMGFDVLYFPPIHPIGTTARKGRNNSLQAAPDDVGSPYAIGSPAGGHTAVHPQLGSLDAFRRLVAAARAHDLEIALDFAVQCSPDHPWLTEHPGWFAWRPDGSLRYAENPPKRYQDIVNPDFYARDAMPALWIALRDVVLFWIDAGVRIFRVDNPHTKPLPFWAWMIADVRARHPDTVFLSEAFTRPSMMYRLAKLGFSQSYTYFTWRESKREFIDYLTELADGPAREYFRPNFFVNTPDINPRHLQQAPRTQFVIRAALAATLSGLWGMYSGFELCESDALPDSEEYRDAEKYELRARDWRRPGHIGDEIARLNRARRDNPALQTHLGIRFAHAPNDAVLVFSKATPAHDNVVVVAISLDPWHPQATDFTLDAALYRGWGIADGERLVAVDQTADHVETWHGRRHYVALDPHVRPFAIWRVAPAAGVARGARDDARDVPAQEVHER</sequence>
<comment type="function">
    <text evidence="1">Maltosyltransferase that uses maltose 1-phosphate (M1P) as the sugar donor to elongate linear or branched alpha-(1-&gt;4)-glucans. Is involved in a branched alpha-glucan biosynthetic pathway from trehalose, together with TreS, Mak and GlgB (By similarity).</text>
</comment>
<comment type="catalytic activity">
    <reaction>
        <text>alpha-maltose 1-phosphate + [(1-&gt;4)-alpha-D-glucosyl](n) = [(1-&gt;4)-alpha-D-glucosyl](n+2) + phosphate</text>
        <dbReference type="Rhea" id="RHEA:42692"/>
        <dbReference type="Rhea" id="RHEA-COMP:9584"/>
        <dbReference type="Rhea" id="RHEA-COMP:10183"/>
        <dbReference type="ChEBI" id="CHEBI:15444"/>
        <dbReference type="ChEBI" id="CHEBI:43474"/>
        <dbReference type="ChEBI" id="CHEBI:63576"/>
        <dbReference type="EC" id="2.4.99.16"/>
    </reaction>
</comment>
<comment type="subunit">
    <text evidence="1">Homodimer.</text>
</comment>
<comment type="similarity">
    <text evidence="2">In the C-terminal section; belongs to the glycosyl hydrolase 13 family. GlgE subfamily.</text>
</comment>
<comment type="sequence caution" evidence="2">
    <conflict type="erroneous initiation">
        <sequence resource="EMBL-CDS" id="CAH36075"/>
    </conflict>
    <text>Extended N-terminus.</text>
</comment>
<accession>Q63T93</accession>
<protein>
    <recommendedName>
        <fullName>Alpha-1,4-glucan:maltose-1-phosphate maltosyltransferase</fullName>
        <shortName>GMPMT</shortName>
        <ecNumber>2.4.99.16</ecNumber>
    </recommendedName>
    <alternativeName>
        <fullName>(1-&gt;4)-alpha-D-glucan:maltose-1-phosphate alpha-D-maltosyltransferase</fullName>
    </alternativeName>
</protein>
<gene>
    <name type="primary">glgE</name>
    <name type="ordered locus">BPSL2074</name>
</gene>
<name>GLGE_BURPS</name>
<keyword id="KW-0119">Carbohydrate metabolism</keyword>
<keyword id="KW-0328">Glycosyltransferase</keyword>
<keyword id="KW-1185">Reference proteome</keyword>
<keyword id="KW-0808">Transferase</keyword>